<evidence type="ECO:0000250" key="1"/>
<evidence type="ECO:0000255" key="2">
    <source>
        <dbReference type="PROSITE-ProRule" id="PRU00809"/>
    </source>
</evidence>
<accession>Q55DY7</accession>
<keyword id="KW-0963">Cytoplasm</keyword>
<keyword id="KW-0539">Nucleus</keyword>
<keyword id="KW-0647">Proteasome</keyword>
<keyword id="KW-1185">Reference proteome</keyword>
<comment type="function">
    <text evidence="1">Non-catalytic component of the proteasome, a multicatalytic proteinase complex which is characterized by its ability to cleave peptides with Arg, Phe, Tyr, Leu, and Glu adjacent to the leaving group at neutral or slightly basic pH. The proteasome has an ATP-dependent proteolytic activity (By similarity).</text>
</comment>
<comment type="subunit">
    <text evidence="1">The 26S proteasome consists of a 20S proteasome core and two 19S regulatory subunits. The 20S proteasome core is composed of 28 subunits that are arranged in four stacked rings, resulting in a barrel-shaped structure. The two end rings are each formed by seven alpha subunits, and the two central rings are each formed by seven beta subunits. The catalytic chamber with the active sites is on the inside of the barrel (By similarity).</text>
</comment>
<comment type="subcellular location">
    <subcellularLocation>
        <location evidence="2">Cytoplasm</location>
    </subcellularLocation>
    <subcellularLocation>
        <location evidence="1">Nucleus</location>
    </subcellularLocation>
</comment>
<comment type="similarity">
    <text evidence="2">Belongs to the peptidase T1B family.</text>
</comment>
<protein>
    <recommendedName>
        <fullName>Proteasome subunit beta type-2</fullName>
    </recommendedName>
</protein>
<name>PSB2_DICDI</name>
<organism>
    <name type="scientific">Dictyostelium discoideum</name>
    <name type="common">Social amoeba</name>
    <dbReference type="NCBI Taxonomy" id="44689"/>
    <lineage>
        <taxon>Eukaryota</taxon>
        <taxon>Amoebozoa</taxon>
        <taxon>Evosea</taxon>
        <taxon>Eumycetozoa</taxon>
        <taxon>Dictyostelia</taxon>
        <taxon>Dictyosteliales</taxon>
        <taxon>Dictyosteliaceae</taxon>
        <taxon>Dictyostelium</taxon>
    </lineage>
</organism>
<gene>
    <name type="primary">psmB2</name>
    <name type="ORF">DDB_G0269472</name>
</gene>
<feature type="chain" id="PRO_0000328130" description="Proteasome subunit beta type-2">
    <location>
        <begin position="1"/>
        <end position="198"/>
    </location>
</feature>
<proteinExistence type="inferred from homology"/>
<dbReference type="EMBL" id="AAFI02000005">
    <property type="protein sequence ID" value="EAL72086.1"/>
    <property type="molecule type" value="Genomic_DNA"/>
</dbReference>
<dbReference type="RefSeq" id="XP_645994.1">
    <property type="nucleotide sequence ID" value="XM_640902.1"/>
</dbReference>
<dbReference type="SMR" id="Q55DY7"/>
<dbReference type="FunCoup" id="Q55DY7">
    <property type="interactions" value="931"/>
</dbReference>
<dbReference type="STRING" id="44689.Q55DY7"/>
<dbReference type="GlyGen" id="Q55DY7">
    <property type="glycosylation" value="1 site"/>
</dbReference>
<dbReference type="PaxDb" id="44689-DDB0232958"/>
<dbReference type="EnsemblProtists" id="EAL72086">
    <property type="protein sequence ID" value="EAL72086"/>
    <property type="gene ID" value="DDB_G0269472"/>
</dbReference>
<dbReference type="GeneID" id="8616940"/>
<dbReference type="KEGG" id="ddi:DDB_G0269472"/>
<dbReference type="dictyBase" id="DDB_G0269472">
    <property type="gene designation" value="psmB2"/>
</dbReference>
<dbReference type="VEuPathDB" id="AmoebaDB:DDB_G0269472"/>
<dbReference type="eggNOG" id="KOG0177">
    <property type="taxonomic scope" value="Eukaryota"/>
</dbReference>
<dbReference type="HOGENOM" id="CLU_035750_12_1_1"/>
<dbReference type="InParanoid" id="Q55DY7"/>
<dbReference type="OMA" id="MKRDHDK"/>
<dbReference type="PhylomeDB" id="Q55DY7"/>
<dbReference type="Reactome" id="R-DDI-1236978">
    <property type="pathway name" value="Cross-presentation of soluble exogenous antigens (endosomes)"/>
</dbReference>
<dbReference type="Reactome" id="R-DDI-174084">
    <property type="pathway name" value="Autodegradation of Cdh1 by Cdh1:APC/C"/>
</dbReference>
<dbReference type="Reactome" id="R-DDI-174154">
    <property type="pathway name" value="APC/C:Cdc20 mediated degradation of Securin"/>
</dbReference>
<dbReference type="Reactome" id="R-DDI-174178">
    <property type="pathway name" value="APC/C:Cdh1 mediated degradation of Cdc20 and other APC/C:Cdh1 targeted proteins in late mitosis/early G1"/>
</dbReference>
<dbReference type="Reactome" id="R-DDI-2467813">
    <property type="pathway name" value="Separation of Sister Chromatids"/>
</dbReference>
<dbReference type="Reactome" id="R-DDI-349425">
    <property type="pathway name" value="Autodegradation of the E3 ubiquitin ligase COP1"/>
</dbReference>
<dbReference type="Reactome" id="R-DDI-382556">
    <property type="pathway name" value="ABC-family proteins mediated transport"/>
</dbReference>
<dbReference type="Reactome" id="R-DDI-450408">
    <property type="pathway name" value="AUF1 (hnRNP D0) binds and destabilizes mRNA"/>
</dbReference>
<dbReference type="Reactome" id="R-DDI-4641258">
    <property type="pathway name" value="Degradation of DVL"/>
</dbReference>
<dbReference type="Reactome" id="R-DDI-5632684">
    <property type="pathway name" value="Hedgehog 'on' state"/>
</dbReference>
<dbReference type="Reactome" id="R-DDI-5658442">
    <property type="pathway name" value="Regulation of RAS by GAPs"/>
</dbReference>
<dbReference type="Reactome" id="R-DDI-5687128">
    <property type="pathway name" value="MAPK6/MAPK4 signaling"/>
</dbReference>
<dbReference type="Reactome" id="R-DDI-5689603">
    <property type="pathway name" value="UCH proteinases"/>
</dbReference>
<dbReference type="Reactome" id="R-DDI-5689880">
    <property type="pathway name" value="Ub-specific processing proteases"/>
</dbReference>
<dbReference type="Reactome" id="R-DDI-68949">
    <property type="pathway name" value="Orc1 removal from chromatin"/>
</dbReference>
<dbReference type="Reactome" id="R-DDI-69017">
    <property type="pathway name" value="CDK-mediated phosphorylation and removal of Cdc6"/>
</dbReference>
<dbReference type="Reactome" id="R-DDI-69601">
    <property type="pathway name" value="Ubiquitin Mediated Degradation of Phosphorylated Cdc25A"/>
</dbReference>
<dbReference type="Reactome" id="R-DDI-8854050">
    <property type="pathway name" value="FBXL7 down-regulates AURKA during mitotic entry and in early mitosis"/>
</dbReference>
<dbReference type="Reactome" id="R-DDI-8948751">
    <property type="pathway name" value="Regulation of PTEN stability and activity"/>
</dbReference>
<dbReference type="Reactome" id="R-DDI-8951664">
    <property type="pathway name" value="Neddylation"/>
</dbReference>
<dbReference type="Reactome" id="R-DDI-9755511">
    <property type="pathway name" value="KEAP1-NFE2L2 pathway"/>
</dbReference>
<dbReference type="Reactome" id="R-DDI-983168">
    <property type="pathway name" value="Antigen processing: Ubiquitination &amp; Proteasome degradation"/>
</dbReference>
<dbReference type="Reactome" id="R-DDI-9907900">
    <property type="pathway name" value="Proteasome assembly"/>
</dbReference>
<dbReference type="PRO" id="PR:Q55DY7"/>
<dbReference type="Proteomes" id="UP000002195">
    <property type="component" value="Chromosome 1"/>
</dbReference>
<dbReference type="GO" id="GO:0005737">
    <property type="term" value="C:cytoplasm"/>
    <property type="evidence" value="ECO:0000353"/>
    <property type="project" value="dictyBase"/>
</dbReference>
<dbReference type="GO" id="GO:0005829">
    <property type="term" value="C:cytosol"/>
    <property type="evidence" value="ECO:0000318"/>
    <property type="project" value="GO_Central"/>
</dbReference>
<dbReference type="GO" id="GO:0005634">
    <property type="term" value="C:nucleus"/>
    <property type="evidence" value="ECO:0000353"/>
    <property type="project" value="dictyBase"/>
</dbReference>
<dbReference type="GO" id="GO:0019774">
    <property type="term" value="C:proteasome core complex, beta-subunit complex"/>
    <property type="evidence" value="ECO:0000314"/>
    <property type="project" value="dictyBase"/>
</dbReference>
<dbReference type="GO" id="GO:0010498">
    <property type="term" value="P:proteasomal protein catabolic process"/>
    <property type="evidence" value="ECO:0000314"/>
    <property type="project" value="dictyBase"/>
</dbReference>
<dbReference type="GO" id="GO:0043161">
    <property type="term" value="P:proteasome-mediated ubiquitin-dependent protein catabolic process"/>
    <property type="evidence" value="ECO:0000318"/>
    <property type="project" value="GO_Central"/>
</dbReference>
<dbReference type="CDD" id="cd03758">
    <property type="entry name" value="proteasome_beta_type_2"/>
    <property type="match status" value="1"/>
</dbReference>
<dbReference type="Gene3D" id="3.60.20.10">
    <property type="entry name" value="Glutamine Phosphoribosylpyrophosphate, subunit 1, domain 1"/>
    <property type="match status" value="1"/>
</dbReference>
<dbReference type="InterPro" id="IPR029055">
    <property type="entry name" value="Ntn_hydrolases_N"/>
</dbReference>
<dbReference type="InterPro" id="IPR035206">
    <property type="entry name" value="Proteasome_beta2"/>
</dbReference>
<dbReference type="InterPro" id="IPR001353">
    <property type="entry name" value="Proteasome_sua/b"/>
</dbReference>
<dbReference type="InterPro" id="IPR023333">
    <property type="entry name" value="Proteasome_suB-type"/>
</dbReference>
<dbReference type="PANTHER" id="PTHR32194">
    <property type="entry name" value="METALLOPROTEASE TLDD"/>
    <property type="match status" value="1"/>
</dbReference>
<dbReference type="PANTHER" id="PTHR32194:SF2">
    <property type="entry name" value="PROTEASOME SUBUNIT BETA TYPE-1"/>
    <property type="match status" value="1"/>
</dbReference>
<dbReference type="Pfam" id="PF00227">
    <property type="entry name" value="Proteasome"/>
    <property type="match status" value="1"/>
</dbReference>
<dbReference type="SUPFAM" id="SSF56235">
    <property type="entry name" value="N-terminal nucleophile aminohydrolases (Ntn hydrolases)"/>
    <property type="match status" value="1"/>
</dbReference>
<dbReference type="PROSITE" id="PS51476">
    <property type="entry name" value="PROTEASOME_BETA_2"/>
    <property type="match status" value="1"/>
</dbReference>
<reference key="1">
    <citation type="journal article" date="2005" name="Nature">
        <title>The genome of the social amoeba Dictyostelium discoideum.</title>
        <authorList>
            <person name="Eichinger L."/>
            <person name="Pachebat J.A."/>
            <person name="Gloeckner G."/>
            <person name="Rajandream M.A."/>
            <person name="Sucgang R."/>
            <person name="Berriman M."/>
            <person name="Song J."/>
            <person name="Olsen R."/>
            <person name="Szafranski K."/>
            <person name="Xu Q."/>
            <person name="Tunggal B."/>
            <person name="Kummerfeld S."/>
            <person name="Madera M."/>
            <person name="Konfortov B.A."/>
            <person name="Rivero F."/>
            <person name="Bankier A.T."/>
            <person name="Lehmann R."/>
            <person name="Hamlin N."/>
            <person name="Davies R."/>
            <person name="Gaudet P."/>
            <person name="Fey P."/>
            <person name="Pilcher K."/>
            <person name="Chen G."/>
            <person name="Saunders D."/>
            <person name="Sodergren E.J."/>
            <person name="Davis P."/>
            <person name="Kerhornou A."/>
            <person name="Nie X."/>
            <person name="Hall N."/>
            <person name="Anjard C."/>
            <person name="Hemphill L."/>
            <person name="Bason N."/>
            <person name="Farbrother P."/>
            <person name="Desany B."/>
            <person name="Just E."/>
            <person name="Morio T."/>
            <person name="Rost R."/>
            <person name="Churcher C.M."/>
            <person name="Cooper J."/>
            <person name="Haydock S."/>
            <person name="van Driessche N."/>
            <person name="Cronin A."/>
            <person name="Goodhead I."/>
            <person name="Muzny D.M."/>
            <person name="Mourier T."/>
            <person name="Pain A."/>
            <person name="Lu M."/>
            <person name="Harper D."/>
            <person name="Lindsay R."/>
            <person name="Hauser H."/>
            <person name="James K.D."/>
            <person name="Quiles M."/>
            <person name="Madan Babu M."/>
            <person name="Saito T."/>
            <person name="Buchrieser C."/>
            <person name="Wardroper A."/>
            <person name="Felder M."/>
            <person name="Thangavelu M."/>
            <person name="Johnson D."/>
            <person name="Knights A."/>
            <person name="Loulseged H."/>
            <person name="Mungall K.L."/>
            <person name="Oliver K."/>
            <person name="Price C."/>
            <person name="Quail M.A."/>
            <person name="Urushihara H."/>
            <person name="Hernandez J."/>
            <person name="Rabbinowitsch E."/>
            <person name="Steffen D."/>
            <person name="Sanders M."/>
            <person name="Ma J."/>
            <person name="Kohara Y."/>
            <person name="Sharp S."/>
            <person name="Simmonds M.N."/>
            <person name="Spiegler S."/>
            <person name="Tivey A."/>
            <person name="Sugano S."/>
            <person name="White B."/>
            <person name="Walker D."/>
            <person name="Woodward J.R."/>
            <person name="Winckler T."/>
            <person name="Tanaka Y."/>
            <person name="Shaulsky G."/>
            <person name="Schleicher M."/>
            <person name="Weinstock G.M."/>
            <person name="Rosenthal A."/>
            <person name="Cox E.C."/>
            <person name="Chisholm R.L."/>
            <person name="Gibbs R.A."/>
            <person name="Loomis W.F."/>
            <person name="Platzer M."/>
            <person name="Kay R.R."/>
            <person name="Williams J.G."/>
            <person name="Dear P.H."/>
            <person name="Noegel A.A."/>
            <person name="Barrell B.G."/>
            <person name="Kuspa A."/>
        </authorList>
    </citation>
    <scope>NUCLEOTIDE SEQUENCE [LARGE SCALE GENOMIC DNA]</scope>
    <source>
        <strain>AX4</strain>
    </source>
</reference>
<sequence length="198" mass="22110">METLLAFKVKGGVLCLADSSVNHSIVKMKDDEDKILEIDGHKLLLSAGEAGDRVQFTEYISKNIKLYSLRNSYPMSTPAAANFIRNELATSIRSHPYSINLILAGYDKEVEDGGTSLYYMDYLGSLQKLNFGCHGYASYFLLGLLDRHHKCDLSLEDGINLMHLCTTELKTRFLVSGKYTLKFVSSEGIKVLPFNAPQ</sequence>